<evidence type="ECO:0000255" key="1"/>
<evidence type="ECO:0000269" key="2">
    <source>
    </source>
</evidence>
<evidence type="ECO:0000269" key="3">
    <source>
    </source>
</evidence>
<evidence type="ECO:0000303" key="4">
    <source>
    </source>
</evidence>
<evidence type="ECO:0000303" key="5">
    <source>
    </source>
</evidence>
<evidence type="ECO:0000305" key="6"/>
<evidence type="ECO:0000305" key="7">
    <source>
    </source>
</evidence>
<evidence type="ECO:0000312" key="8">
    <source>
        <dbReference type="EMBL" id="ACZ44704.1"/>
    </source>
</evidence>
<evidence type="ECO:0000312" key="9">
    <source>
        <dbReference type="EMBL" id="CAN87011.1"/>
    </source>
</evidence>
<comment type="function">
    <text evidence="2">Antimicrobial activity against the Gram-negative bacterium E.coli, the Gram-positive bacterium S.aureus and the yeast C.albicans.</text>
</comment>
<comment type="subcellular location">
    <subcellularLocation>
        <location evidence="2">Secreted</location>
    </subcellularLocation>
</comment>
<comment type="tissue specificity">
    <text evidence="2">Expressed by the skin glands.</text>
</comment>
<comment type="mass spectrometry" mass="3849.6" error="0.8" method="Electrospray" evidence="2"/>
<comment type="similarity">
    <text evidence="1">Belongs to the frog skin active peptide (FSAP) family. Esculentin subfamily.</text>
</comment>
<comment type="online information" name="The antimicrobial peptide database">
    <link uri="https://wangapd3.com/database/query_output.php?ID=00651"/>
</comment>
<name>E2PLA_LITPA</name>
<keyword id="KW-0878">Amphibian defense peptide</keyword>
<keyword id="KW-0044">Antibiotic</keyword>
<keyword id="KW-0929">Antimicrobial</keyword>
<keyword id="KW-0165">Cleavage on pair of basic residues</keyword>
<keyword id="KW-0903">Direct protein sequencing</keyword>
<keyword id="KW-1015">Disulfide bond</keyword>
<keyword id="KW-0295">Fungicide</keyword>
<keyword id="KW-0964">Secreted</keyword>
<keyword id="KW-0732">Signal</keyword>
<sequence length="78" mass="8518">MFTTKKSMLLLFFLGTISLSLCEEERGADEEEGDGEKLMKRGLFSILKGVGKIALKGLAKNMGKMGLDLVSCKISKEC</sequence>
<feature type="signal peptide" evidence="1">
    <location>
        <begin position="1"/>
        <end position="22"/>
    </location>
</feature>
<feature type="propeptide" id="PRO_5000271598" evidence="7">
    <location>
        <begin position="23"/>
        <end position="39"/>
    </location>
</feature>
<feature type="peptide" id="PRO_5000271599" description="Esculentin-2PLa" evidence="2">
    <location>
        <begin position="42"/>
        <end position="78"/>
    </location>
</feature>
<feature type="disulfide bond" evidence="2">
    <location>
        <begin position="72"/>
        <end position="78"/>
    </location>
</feature>
<protein>
    <recommendedName>
        <fullName evidence="4 5">Esculentin-2PLa</fullName>
    </recommendedName>
</protein>
<accession>A7WNV5</accession>
<accession>D3UA57</accession>
<proteinExistence type="evidence at protein level"/>
<dbReference type="EMBL" id="AM745089">
    <property type="protein sequence ID" value="CAN87011.1"/>
    <property type="molecule type" value="mRNA"/>
</dbReference>
<dbReference type="EMBL" id="FJ845456">
    <property type="protein sequence ID" value="ACZ44704.1"/>
    <property type="molecule type" value="Genomic_DNA"/>
</dbReference>
<dbReference type="SMR" id="A7WNV5"/>
<dbReference type="GO" id="GO:0005576">
    <property type="term" value="C:extracellular region"/>
    <property type="evidence" value="ECO:0007669"/>
    <property type="project" value="UniProtKB-SubCell"/>
</dbReference>
<dbReference type="GO" id="GO:0050832">
    <property type="term" value="P:defense response to fungus"/>
    <property type="evidence" value="ECO:0007669"/>
    <property type="project" value="UniProtKB-KW"/>
</dbReference>
<dbReference type="GO" id="GO:0050829">
    <property type="term" value="P:defense response to Gram-negative bacterium"/>
    <property type="evidence" value="ECO:0007669"/>
    <property type="project" value="UniProtKB-ARBA"/>
</dbReference>
<dbReference type="GO" id="GO:0031640">
    <property type="term" value="P:killing of cells of another organism"/>
    <property type="evidence" value="ECO:0007669"/>
    <property type="project" value="UniProtKB-KW"/>
</dbReference>
<dbReference type="InterPro" id="IPR012521">
    <property type="entry name" value="Antimicrobial_frog_2"/>
</dbReference>
<dbReference type="InterPro" id="IPR004275">
    <property type="entry name" value="Frog_antimicrobial_propeptide"/>
</dbReference>
<dbReference type="Pfam" id="PF08023">
    <property type="entry name" value="Antimicrobial_2"/>
    <property type="match status" value="1"/>
</dbReference>
<dbReference type="Pfam" id="PF03032">
    <property type="entry name" value="FSAP_sig_propep"/>
    <property type="match status" value="1"/>
</dbReference>
<reference evidence="9" key="1">
    <citation type="journal article" date="2007" name="Peptides">
        <title>Rapid identification of precursor cDNAs encoding five structural classes of antimicrobial peptides from pickerel frog (Rana palustris) skin secretion by single step 'shotgun' cloning.</title>
        <authorList>
            <person name="Zhou M."/>
            <person name="Wang L."/>
            <person name="Owens D.E."/>
            <person name="Chen T."/>
            <person name="Walker B."/>
            <person name="Shaw C."/>
        </authorList>
    </citation>
    <scope>NUCLEOTIDE SEQUENCE [MRNA]</scope>
    <source>
        <tissue evidence="3">Skin secretion</tissue>
    </source>
</reference>
<reference evidence="6 8" key="2">
    <citation type="submission" date="2009-03" db="EMBL/GenBank/DDBJ databases">
        <authorList>
            <person name="Tennessen J.A."/>
            <person name="Blouin M.S."/>
        </authorList>
    </citation>
    <scope>NUCLEOTIDE SEQUENCE [GENOMIC DNA] OF 39-78</scope>
</reference>
<reference evidence="6" key="3">
    <citation type="journal article" date="2000" name="Biochim. Biophys. Acta">
        <title>Multiple antimicrobial peptides and peptides related to bradykinin and neuromedin N isolated from skin secretions of the pickerel frog, Rana palustris.</title>
        <authorList>
            <person name="Basir Y.J."/>
            <person name="Knoop F.C."/>
            <person name="Dulka J."/>
            <person name="Conlon J.M."/>
        </authorList>
    </citation>
    <scope>PROTEIN SEQUENCE OF 42-78</scope>
    <scope>FUNCTION</scope>
    <scope>SUBCELLULAR LOCATION</scope>
    <scope>TISSUE SPECIFICITY</scope>
    <scope>MASS SPECTROMETRY</scope>
    <scope>DISULFIDE BOND</scope>
    <source>
        <tissue evidence="2">Skin secretion</tissue>
    </source>
</reference>
<organism>
    <name type="scientific">Lithobates palustris</name>
    <name type="common">Pickerel frog</name>
    <name type="synonym">Rana palustris</name>
    <dbReference type="NCBI Taxonomy" id="298395"/>
    <lineage>
        <taxon>Eukaryota</taxon>
        <taxon>Metazoa</taxon>
        <taxon>Chordata</taxon>
        <taxon>Craniata</taxon>
        <taxon>Vertebrata</taxon>
        <taxon>Euteleostomi</taxon>
        <taxon>Amphibia</taxon>
        <taxon>Batrachia</taxon>
        <taxon>Anura</taxon>
        <taxon>Neobatrachia</taxon>
        <taxon>Ranoidea</taxon>
        <taxon>Ranidae</taxon>
        <taxon>Lithobates</taxon>
    </lineage>
</organism>